<accession>Q8Z706</accession>
<comment type="subcellular location">
    <subcellularLocation>
        <location evidence="1">Cell membrane</location>
        <topology evidence="1">Multi-pass membrane protein</topology>
    </subcellularLocation>
</comment>
<comment type="similarity">
    <text evidence="2">Belongs to the anion channel-forming bestrophin (TC 1.A.46) family.</text>
</comment>
<comment type="sequence caution" evidence="2">
    <conflict type="erroneous initiation">
        <sequence resource="EMBL-CDS" id="AAO69090"/>
    </conflict>
</comment>
<comment type="sequence caution" evidence="2">
    <conflict type="erroneous initiation">
        <sequence resource="EMBL-CDS" id="CAD01787"/>
    </conflict>
</comment>
<keyword id="KW-1003">Cell membrane</keyword>
<keyword id="KW-0406">Ion transport</keyword>
<keyword id="KW-0472">Membrane</keyword>
<keyword id="KW-0812">Transmembrane</keyword>
<keyword id="KW-1133">Transmembrane helix</keyword>
<keyword id="KW-0813">Transport</keyword>
<gene>
    <name type="primary">yneE</name>
    <name type="ordered locus">STY1534</name>
    <name type="ordered locus">t1448</name>
</gene>
<organism>
    <name type="scientific">Salmonella typhi</name>
    <dbReference type="NCBI Taxonomy" id="90370"/>
    <lineage>
        <taxon>Bacteria</taxon>
        <taxon>Pseudomonadati</taxon>
        <taxon>Pseudomonadota</taxon>
        <taxon>Gammaproteobacteria</taxon>
        <taxon>Enterobacterales</taxon>
        <taxon>Enterobacteriaceae</taxon>
        <taxon>Salmonella</taxon>
    </lineage>
</organism>
<protein>
    <recommendedName>
        <fullName>Voltage-dependent anion channel-forming protein YneE</fullName>
    </recommendedName>
</protein>
<proteinExistence type="inferred from homology"/>
<evidence type="ECO:0000255" key="1"/>
<evidence type="ECO:0000305" key="2"/>
<name>YNEE_SALTI</name>
<reference key="1">
    <citation type="journal article" date="2001" name="Nature">
        <title>Complete genome sequence of a multiple drug resistant Salmonella enterica serovar Typhi CT18.</title>
        <authorList>
            <person name="Parkhill J."/>
            <person name="Dougan G."/>
            <person name="James K.D."/>
            <person name="Thomson N.R."/>
            <person name="Pickard D."/>
            <person name="Wain J."/>
            <person name="Churcher C.M."/>
            <person name="Mungall K.L."/>
            <person name="Bentley S.D."/>
            <person name="Holden M.T.G."/>
            <person name="Sebaihia M."/>
            <person name="Baker S."/>
            <person name="Basham D."/>
            <person name="Brooks K."/>
            <person name="Chillingworth T."/>
            <person name="Connerton P."/>
            <person name="Cronin A."/>
            <person name="Davis P."/>
            <person name="Davies R.M."/>
            <person name="Dowd L."/>
            <person name="White N."/>
            <person name="Farrar J."/>
            <person name="Feltwell T."/>
            <person name="Hamlin N."/>
            <person name="Haque A."/>
            <person name="Hien T.T."/>
            <person name="Holroyd S."/>
            <person name="Jagels K."/>
            <person name="Krogh A."/>
            <person name="Larsen T.S."/>
            <person name="Leather S."/>
            <person name="Moule S."/>
            <person name="O'Gaora P."/>
            <person name="Parry C."/>
            <person name="Quail M.A."/>
            <person name="Rutherford K.M."/>
            <person name="Simmonds M."/>
            <person name="Skelton J."/>
            <person name="Stevens K."/>
            <person name="Whitehead S."/>
            <person name="Barrell B.G."/>
        </authorList>
    </citation>
    <scope>NUCLEOTIDE SEQUENCE [LARGE SCALE GENOMIC DNA]</scope>
    <source>
        <strain>CT18</strain>
    </source>
</reference>
<reference key="2">
    <citation type="journal article" date="2003" name="J. Bacteriol.">
        <title>Comparative genomics of Salmonella enterica serovar Typhi strains Ty2 and CT18.</title>
        <authorList>
            <person name="Deng W."/>
            <person name="Liou S.-R."/>
            <person name="Plunkett G. III"/>
            <person name="Mayhew G.F."/>
            <person name="Rose D.J."/>
            <person name="Burland V."/>
            <person name="Kodoyianni V."/>
            <person name="Schwartz D.C."/>
            <person name="Blattner F.R."/>
        </authorList>
    </citation>
    <scope>NUCLEOTIDE SEQUENCE [LARGE SCALE GENOMIC DNA]</scope>
    <source>
        <strain>ATCC 700931 / Ty2</strain>
    </source>
</reference>
<dbReference type="EMBL" id="AL513382">
    <property type="protein sequence ID" value="CAD01787.1"/>
    <property type="status" value="ALT_INIT"/>
    <property type="molecule type" value="Genomic_DNA"/>
</dbReference>
<dbReference type="EMBL" id="AE014613">
    <property type="protein sequence ID" value="AAO69090.1"/>
    <property type="status" value="ALT_INIT"/>
    <property type="molecule type" value="Genomic_DNA"/>
</dbReference>
<dbReference type="RefSeq" id="NP_455954.1">
    <property type="nucleotide sequence ID" value="NC_003198.1"/>
</dbReference>
<dbReference type="RefSeq" id="WP_001670736.1">
    <property type="nucleotide sequence ID" value="NZ_WSUR01000006.1"/>
</dbReference>
<dbReference type="SMR" id="Q8Z706"/>
<dbReference type="STRING" id="220341.gene:17585477"/>
<dbReference type="KEGG" id="stt:t1448"/>
<dbReference type="KEGG" id="sty:STY1534"/>
<dbReference type="PATRIC" id="fig|220341.7.peg.1543"/>
<dbReference type="eggNOG" id="COG3781">
    <property type="taxonomic scope" value="Bacteria"/>
</dbReference>
<dbReference type="HOGENOM" id="CLU_029790_4_2_6"/>
<dbReference type="OMA" id="AYSVMIH"/>
<dbReference type="Proteomes" id="UP000000541">
    <property type="component" value="Chromosome"/>
</dbReference>
<dbReference type="Proteomes" id="UP000002670">
    <property type="component" value="Chromosome"/>
</dbReference>
<dbReference type="GO" id="GO:0005886">
    <property type="term" value="C:plasma membrane"/>
    <property type="evidence" value="ECO:0007669"/>
    <property type="project" value="UniProtKB-SubCell"/>
</dbReference>
<dbReference type="GO" id="GO:0005254">
    <property type="term" value="F:chloride channel activity"/>
    <property type="evidence" value="ECO:0007669"/>
    <property type="project" value="InterPro"/>
</dbReference>
<dbReference type="InterPro" id="IPR021134">
    <property type="entry name" value="Bestrophin-like"/>
</dbReference>
<dbReference type="InterPro" id="IPR044669">
    <property type="entry name" value="YneE/VCCN1/2-like"/>
</dbReference>
<dbReference type="PANTHER" id="PTHR33281">
    <property type="entry name" value="UPF0187 PROTEIN YNEE"/>
    <property type="match status" value="1"/>
</dbReference>
<dbReference type="PANTHER" id="PTHR33281:SF19">
    <property type="entry name" value="VOLTAGE-DEPENDENT ANION CHANNEL-FORMING PROTEIN YNEE"/>
    <property type="match status" value="1"/>
</dbReference>
<dbReference type="Pfam" id="PF01062">
    <property type="entry name" value="Bestrophin"/>
    <property type="match status" value="1"/>
</dbReference>
<feature type="chain" id="PRO_0000217665" description="Voltage-dependent anion channel-forming protein YneE">
    <location>
        <begin position="1"/>
        <end position="304"/>
    </location>
</feature>
<feature type="transmembrane region" description="Helical" evidence="1">
    <location>
        <begin position="28"/>
        <end position="48"/>
    </location>
</feature>
<feature type="transmembrane region" description="Helical" evidence="1">
    <location>
        <begin position="50"/>
        <end position="70"/>
    </location>
</feature>
<feature type="transmembrane region" description="Helical" evidence="1">
    <location>
        <begin position="209"/>
        <end position="229"/>
    </location>
</feature>
<feature type="transmembrane region" description="Helical" evidence="1">
    <location>
        <begin position="235"/>
        <end position="255"/>
    </location>
</feature>
<sequence length="304" mass="34942">MIVRPQQHWIRLIFVWHGSVLSKIFSRLLLNFLLSIAVIIMLPWYTMLGIKFTLAPFSILGVAIAIFLGFRNNACYARYVEARHLWGQLMIASRSILREVKTTLPDERGIEDFVRLQIAFAHCLRMTLRRQPQTQVLGNYLDQEALQKVVASHSPANRILLLMGEWLAIRRRSGKLSDILFHSLNNRLNDMSSVLAGCERIANTPVPFAYTLILHRTVYLFCIMLPFALVVDLHYMTPFISVLISYTFIALDALAEELEDPFGTENNDLPLDAICNAIEIDLLQMNDERDIPAKRIPDKRYQLT</sequence>